<sequence>MAISIHPPRDPNTLSNYNNWICTHITANFDILFDQKKLVGNVIHKLKSTTNGESQEIILDSNHVAIGDVKIDGRPSEWELLPPLEPYGSALKIKLDQGVNLNETIDVEISVQTTEKCTALQWLTPAQTSNKKHPYMFSQCQAIHARSIFPCQDTPDVKSTIDFNISSPLPVIASGLPVRDALGASKSEGKSLYQFHQRVPIPSYLFALASGDISEAAIGPRSVVATSPDKVQECQWELEADTEKFIGAIEKIVYPYAWGEYNVLILPPSFPYGGMENPIFTFATPSIISKDRENIDVIAHELAHSWSGNLVTNASWEHFWLNEGWTTYLERRILAAVHGEAYRHFSAIIGWKALTDSVEHFGHDHEFTKLITDLKGKDPDDAFSSIPYEKGFNFLFHLETLVGKQKFDRFIPHYFTVFKGKSLDSYEFKATLLDFFGTDAEASKLLNDLDWDTWFYAPGLPPKPQFDTSLVDVVYELAQKWKSLSETSSFKPQLSDIESLSANQIVVFLEQMLLLERPLTPELSKLMGEVYGLSKSENIEVANLYFQLGLKAGDENVVDPATELLGRIGRMKFVRPLFRSLQRVNREVAVATFEKYKDFYHPICRAMVEKDLFGKRDV</sequence>
<accession>A2QKF8</accession>
<evidence type="ECO:0000250" key="1">
    <source>
        <dbReference type="UniProtKB" id="P09960"/>
    </source>
</evidence>
<evidence type="ECO:0000250" key="2">
    <source>
        <dbReference type="UniProtKB" id="Q10740"/>
    </source>
</evidence>
<evidence type="ECO:0000255" key="3">
    <source>
        <dbReference type="PROSITE-ProRule" id="PRU10095"/>
    </source>
</evidence>
<evidence type="ECO:0000305" key="4"/>
<keyword id="KW-0963">Cytoplasm</keyword>
<keyword id="KW-0378">Hydrolase</keyword>
<keyword id="KW-0479">Metal-binding</keyword>
<keyword id="KW-0482">Metalloprotease</keyword>
<keyword id="KW-0539">Nucleus</keyword>
<keyword id="KW-0645">Protease</keyword>
<keyword id="KW-1185">Reference proteome</keyword>
<keyword id="KW-0862">Zinc</keyword>
<proteinExistence type="inferred from homology"/>
<dbReference type="EC" id="3.4.11.-"/>
<dbReference type="EC" id="3.3.2.10"/>
<dbReference type="EMBL" id="AM270101">
    <property type="protein sequence ID" value="CAK44827.1"/>
    <property type="status" value="ALT_INIT"/>
    <property type="molecule type" value="Genomic_DNA"/>
</dbReference>
<dbReference type="RefSeq" id="XP_001390581.1">
    <property type="nucleotide sequence ID" value="XM_001390544.2"/>
</dbReference>
<dbReference type="SMR" id="A2QKF8"/>
<dbReference type="MEROPS" id="M01.034"/>
<dbReference type="EnsemblFungi" id="CAK44827">
    <property type="protein sequence ID" value="CAK44827"/>
    <property type="gene ID" value="An05g00070"/>
</dbReference>
<dbReference type="GeneID" id="4980749"/>
<dbReference type="KEGG" id="ang:An05g00070"/>
<dbReference type="Proteomes" id="UP000006706">
    <property type="component" value="Chromosome 7L"/>
</dbReference>
<dbReference type="GO" id="GO:0005829">
    <property type="term" value="C:cytosol"/>
    <property type="evidence" value="ECO:0007669"/>
    <property type="project" value="TreeGrafter"/>
</dbReference>
<dbReference type="GO" id="GO:0000328">
    <property type="term" value="C:fungal-type vacuole lumen"/>
    <property type="evidence" value="ECO:0007669"/>
    <property type="project" value="EnsemblFungi"/>
</dbReference>
<dbReference type="GO" id="GO:0005771">
    <property type="term" value="C:multivesicular body"/>
    <property type="evidence" value="ECO:0007669"/>
    <property type="project" value="EnsemblFungi"/>
</dbReference>
<dbReference type="GO" id="GO:0005634">
    <property type="term" value="C:nucleus"/>
    <property type="evidence" value="ECO:0007669"/>
    <property type="project" value="UniProtKB-SubCell"/>
</dbReference>
<dbReference type="GO" id="GO:0061957">
    <property type="term" value="C:NVT complex"/>
    <property type="evidence" value="ECO:0007669"/>
    <property type="project" value="EnsemblFungi"/>
</dbReference>
<dbReference type="GO" id="GO:0004177">
    <property type="term" value="F:aminopeptidase activity"/>
    <property type="evidence" value="ECO:0000250"/>
    <property type="project" value="UniProtKB"/>
</dbReference>
<dbReference type="GO" id="GO:0004301">
    <property type="term" value="F:epoxide hydrolase activity"/>
    <property type="evidence" value="ECO:0000250"/>
    <property type="project" value="UniProtKB"/>
</dbReference>
<dbReference type="GO" id="GO:0008237">
    <property type="term" value="F:metallopeptidase activity"/>
    <property type="evidence" value="ECO:0007669"/>
    <property type="project" value="UniProtKB-KW"/>
</dbReference>
<dbReference type="GO" id="GO:0008270">
    <property type="term" value="F:zinc ion binding"/>
    <property type="evidence" value="ECO:0000250"/>
    <property type="project" value="UniProtKB"/>
</dbReference>
<dbReference type="GO" id="GO:0120113">
    <property type="term" value="P:cytoplasm to vacuole targeting by the NVT pathway"/>
    <property type="evidence" value="ECO:0007669"/>
    <property type="project" value="EnsemblFungi"/>
</dbReference>
<dbReference type="GO" id="GO:0006629">
    <property type="term" value="P:lipid metabolic process"/>
    <property type="evidence" value="ECO:0007669"/>
    <property type="project" value="EnsemblFungi"/>
</dbReference>
<dbReference type="GO" id="GO:0043171">
    <property type="term" value="P:peptide catabolic process"/>
    <property type="evidence" value="ECO:0000250"/>
    <property type="project" value="UniProtKB"/>
</dbReference>
<dbReference type="GO" id="GO:0030163">
    <property type="term" value="P:protein catabolic process"/>
    <property type="evidence" value="ECO:0007669"/>
    <property type="project" value="EnsemblFungi"/>
</dbReference>
<dbReference type="GO" id="GO:0006508">
    <property type="term" value="P:proteolysis"/>
    <property type="evidence" value="ECO:0007669"/>
    <property type="project" value="UniProtKB-KW"/>
</dbReference>
<dbReference type="CDD" id="cd09599">
    <property type="entry name" value="M1_LTA4H"/>
    <property type="match status" value="1"/>
</dbReference>
<dbReference type="FunFam" id="1.10.390.10:FF:000009">
    <property type="entry name" value="Leukotriene A(4) hydrolase"/>
    <property type="match status" value="1"/>
</dbReference>
<dbReference type="FunFam" id="1.25.40.320:FF:000001">
    <property type="entry name" value="Leukotriene A(4) hydrolase"/>
    <property type="match status" value="1"/>
</dbReference>
<dbReference type="FunFam" id="2.60.40.1730:FF:000004">
    <property type="entry name" value="Leukotriene A(4) hydrolase"/>
    <property type="match status" value="1"/>
</dbReference>
<dbReference type="FunFam" id="3.30.2010.30:FF:000001">
    <property type="entry name" value="Leukotriene A(4) hydrolase"/>
    <property type="match status" value="1"/>
</dbReference>
<dbReference type="Gene3D" id="3.30.2010.30">
    <property type="match status" value="1"/>
</dbReference>
<dbReference type="Gene3D" id="1.10.390.10">
    <property type="entry name" value="Neutral Protease Domain 2"/>
    <property type="match status" value="1"/>
</dbReference>
<dbReference type="Gene3D" id="1.25.40.320">
    <property type="entry name" value="Peptidase M1, leukotriene A4 hydrolase/aminopeptidase C-terminal domain"/>
    <property type="match status" value="1"/>
</dbReference>
<dbReference type="Gene3D" id="2.60.40.1730">
    <property type="entry name" value="tricorn interacting facor f3 domain"/>
    <property type="match status" value="1"/>
</dbReference>
<dbReference type="InterPro" id="IPR045357">
    <property type="entry name" value="Aminopeptidase_N-like_N"/>
</dbReference>
<dbReference type="InterPro" id="IPR042097">
    <property type="entry name" value="Aminopeptidase_N-like_N_sf"/>
</dbReference>
<dbReference type="InterPro" id="IPR016024">
    <property type="entry name" value="ARM-type_fold"/>
</dbReference>
<dbReference type="InterPro" id="IPR012777">
    <property type="entry name" value="LTA4H"/>
</dbReference>
<dbReference type="InterPro" id="IPR049980">
    <property type="entry name" value="LTA4H_cat"/>
</dbReference>
<dbReference type="InterPro" id="IPR038502">
    <property type="entry name" value="M1_LTA-4_hydro/amino_C_sf"/>
</dbReference>
<dbReference type="InterPro" id="IPR034015">
    <property type="entry name" value="M1_LTA4H"/>
</dbReference>
<dbReference type="InterPro" id="IPR001930">
    <property type="entry name" value="Peptidase_M1"/>
</dbReference>
<dbReference type="InterPro" id="IPR015211">
    <property type="entry name" value="Peptidase_M1_C"/>
</dbReference>
<dbReference type="InterPro" id="IPR014782">
    <property type="entry name" value="Peptidase_M1_dom"/>
</dbReference>
<dbReference type="InterPro" id="IPR027268">
    <property type="entry name" value="Peptidase_M4/M1_CTD_sf"/>
</dbReference>
<dbReference type="NCBIfam" id="TIGR02411">
    <property type="entry name" value="leuko_A4_hydro"/>
    <property type="match status" value="1"/>
</dbReference>
<dbReference type="PANTHER" id="PTHR45726">
    <property type="entry name" value="LEUKOTRIENE A-4 HYDROLASE"/>
    <property type="match status" value="1"/>
</dbReference>
<dbReference type="PANTHER" id="PTHR45726:SF3">
    <property type="entry name" value="LEUKOTRIENE A-4 HYDROLASE"/>
    <property type="match status" value="1"/>
</dbReference>
<dbReference type="Pfam" id="PF09127">
    <property type="entry name" value="Leuk-A4-hydro_C"/>
    <property type="match status" value="1"/>
</dbReference>
<dbReference type="Pfam" id="PF01433">
    <property type="entry name" value="Peptidase_M1"/>
    <property type="match status" value="1"/>
</dbReference>
<dbReference type="Pfam" id="PF17900">
    <property type="entry name" value="Peptidase_M1_N"/>
    <property type="match status" value="1"/>
</dbReference>
<dbReference type="PRINTS" id="PR00756">
    <property type="entry name" value="ALADIPTASE"/>
</dbReference>
<dbReference type="SMART" id="SM01263">
    <property type="entry name" value="Leuk-A4-hydro_C"/>
    <property type="match status" value="1"/>
</dbReference>
<dbReference type="SUPFAM" id="SSF48371">
    <property type="entry name" value="ARM repeat"/>
    <property type="match status" value="1"/>
</dbReference>
<dbReference type="SUPFAM" id="SSF63737">
    <property type="entry name" value="Leukotriene A4 hydrolase N-terminal domain"/>
    <property type="match status" value="1"/>
</dbReference>
<dbReference type="SUPFAM" id="SSF55486">
    <property type="entry name" value="Metalloproteases ('zincins'), catalytic domain"/>
    <property type="match status" value="1"/>
</dbReference>
<dbReference type="PROSITE" id="PS00142">
    <property type="entry name" value="ZINC_PROTEASE"/>
    <property type="match status" value="1"/>
</dbReference>
<gene>
    <name type="ORF">An05g00070</name>
</gene>
<organism>
    <name type="scientific">Aspergillus niger (strain ATCC MYA-4892 / CBS 513.88 / FGSC A1513)</name>
    <dbReference type="NCBI Taxonomy" id="425011"/>
    <lineage>
        <taxon>Eukaryota</taxon>
        <taxon>Fungi</taxon>
        <taxon>Dikarya</taxon>
        <taxon>Ascomycota</taxon>
        <taxon>Pezizomycotina</taxon>
        <taxon>Eurotiomycetes</taxon>
        <taxon>Eurotiomycetidae</taxon>
        <taxon>Eurotiales</taxon>
        <taxon>Aspergillaceae</taxon>
        <taxon>Aspergillus</taxon>
        <taxon>Aspergillus subgen. Circumdati</taxon>
    </lineage>
</organism>
<feature type="chain" id="PRO_0000324920" description="Leucine aminopeptidase 2">
    <location>
        <begin position="1"/>
        <end position="618"/>
    </location>
</feature>
<feature type="active site" description="Proton acceptor" evidence="3">
    <location>
        <position position="301"/>
    </location>
</feature>
<feature type="active site" description="Proton donor" evidence="3">
    <location>
        <position position="388"/>
    </location>
</feature>
<feature type="binding site" evidence="1">
    <location>
        <begin position="139"/>
        <end position="141"/>
    </location>
    <ligand>
        <name>a peptide</name>
        <dbReference type="ChEBI" id="CHEBI:60466"/>
    </ligand>
</feature>
<feature type="binding site" evidence="1">
    <location>
        <begin position="271"/>
        <end position="276"/>
    </location>
    <ligand>
        <name>a peptide</name>
        <dbReference type="ChEBI" id="CHEBI:60466"/>
    </ligand>
</feature>
<feature type="binding site" evidence="3">
    <location>
        <position position="300"/>
    </location>
    <ligand>
        <name>Zn(2+)</name>
        <dbReference type="ChEBI" id="CHEBI:29105"/>
        <note>catalytic</note>
    </ligand>
</feature>
<feature type="binding site" evidence="3">
    <location>
        <position position="304"/>
    </location>
    <ligand>
        <name>Zn(2+)</name>
        <dbReference type="ChEBI" id="CHEBI:29105"/>
        <note>catalytic</note>
    </ligand>
</feature>
<feature type="binding site" evidence="3">
    <location>
        <position position="323"/>
    </location>
    <ligand>
        <name>Zn(2+)</name>
        <dbReference type="ChEBI" id="CHEBI:29105"/>
        <note>catalytic</note>
    </ligand>
</feature>
<comment type="function">
    <text evidence="2">Aminopeptidase that preferentially cleaves di- and tripeptides. Also has low epoxide hydrolase activity (in vitro). Can hydrolyze the epoxide leukotriene LTA(4) but it forms preferentially 5,6-dihydroxy-7,9,11,14-eicosatetraenoic acid rather than the cytokine leukotriene B(4) as the product compared to the homologous mammalian enzyme (in vitro).</text>
</comment>
<comment type="catalytic activity">
    <reaction evidence="2">
        <text>an epoxide + H2O = an ethanediol</text>
        <dbReference type="Rhea" id="RHEA:19037"/>
        <dbReference type="ChEBI" id="CHEBI:15377"/>
        <dbReference type="ChEBI" id="CHEBI:32955"/>
        <dbReference type="ChEBI" id="CHEBI:140594"/>
        <dbReference type="EC" id="3.3.2.10"/>
    </reaction>
</comment>
<comment type="cofactor">
    <cofactor evidence="2">
        <name>Zn(2+)</name>
        <dbReference type="ChEBI" id="CHEBI:29105"/>
    </cofactor>
    <text evidence="2">Binds 1 zinc ion per subunit.</text>
</comment>
<comment type="subcellular location">
    <subcellularLocation>
        <location evidence="2">Cytoplasm</location>
    </subcellularLocation>
    <subcellularLocation>
        <location evidence="2">Nucleus</location>
    </subcellularLocation>
</comment>
<comment type="similarity">
    <text evidence="4">Belongs to the peptidase M1 family.</text>
</comment>
<comment type="sequence caution" evidence="4">
    <conflict type="erroneous initiation">
        <sequence resource="EMBL-CDS" id="CAK44827"/>
    </conflict>
</comment>
<protein>
    <recommendedName>
        <fullName>Leucine aminopeptidase 2</fullName>
        <ecNumber>3.4.11.-</ecNumber>
    </recommendedName>
    <alternativeName>
        <fullName>Epoxide hydrolase</fullName>
        <ecNumber>3.3.2.10</ecNumber>
    </alternativeName>
    <alternativeName>
        <fullName>Leukotriene A-4 hydrolase homolog</fullName>
        <shortName>LTA-4 hydrolase</shortName>
    </alternativeName>
</protein>
<reference key="1">
    <citation type="journal article" date="2007" name="Nat. Biotechnol.">
        <title>Genome sequencing and analysis of the versatile cell factory Aspergillus niger CBS 513.88.</title>
        <authorList>
            <person name="Pel H.J."/>
            <person name="de Winde J.H."/>
            <person name="Archer D.B."/>
            <person name="Dyer P.S."/>
            <person name="Hofmann G."/>
            <person name="Schaap P.J."/>
            <person name="Turner G."/>
            <person name="de Vries R.P."/>
            <person name="Albang R."/>
            <person name="Albermann K."/>
            <person name="Andersen M.R."/>
            <person name="Bendtsen J.D."/>
            <person name="Benen J.A.E."/>
            <person name="van den Berg M."/>
            <person name="Breestraat S."/>
            <person name="Caddick M.X."/>
            <person name="Contreras R."/>
            <person name="Cornell M."/>
            <person name="Coutinho P.M."/>
            <person name="Danchin E.G.J."/>
            <person name="Debets A.J.M."/>
            <person name="Dekker P."/>
            <person name="van Dijck P.W.M."/>
            <person name="van Dijk A."/>
            <person name="Dijkhuizen L."/>
            <person name="Driessen A.J.M."/>
            <person name="d'Enfert C."/>
            <person name="Geysens S."/>
            <person name="Goosen C."/>
            <person name="Groot G.S.P."/>
            <person name="de Groot P.W.J."/>
            <person name="Guillemette T."/>
            <person name="Henrissat B."/>
            <person name="Herweijer M."/>
            <person name="van den Hombergh J.P.T.W."/>
            <person name="van den Hondel C.A.M.J.J."/>
            <person name="van der Heijden R.T.J.M."/>
            <person name="van der Kaaij R.M."/>
            <person name="Klis F.M."/>
            <person name="Kools H.J."/>
            <person name="Kubicek C.P."/>
            <person name="van Kuyk P.A."/>
            <person name="Lauber J."/>
            <person name="Lu X."/>
            <person name="van der Maarel M.J.E.C."/>
            <person name="Meulenberg R."/>
            <person name="Menke H."/>
            <person name="Mortimer M.A."/>
            <person name="Nielsen J."/>
            <person name="Oliver S.G."/>
            <person name="Olsthoorn M."/>
            <person name="Pal K."/>
            <person name="van Peij N.N.M.E."/>
            <person name="Ram A.F.J."/>
            <person name="Rinas U."/>
            <person name="Roubos J.A."/>
            <person name="Sagt C.M.J."/>
            <person name="Schmoll M."/>
            <person name="Sun J."/>
            <person name="Ussery D."/>
            <person name="Varga J."/>
            <person name="Vervecken W."/>
            <person name="van de Vondervoort P.J.J."/>
            <person name="Wedler H."/>
            <person name="Woesten H.A.B."/>
            <person name="Zeng A.-P."/>
            <person name="van Ooyen A.J.J."/>
            <person name="Visser J."/>
            <person name="Stam H."/>
        </authorList>
    </citation>
    <scope>NUCLEOTIDE SEQUENCE [LARGE SCALE GENOMIC DNA]</scope>
    <source>
        <strain>ATCC MYA-4892 / CBS 513.88 / FGSC A1513</strain>
    </source>
</reference>
<name>LKHA4_ASPNC</name>